<name>GBRAP_HUMAN</name>
<feature type="chain" id="PRO_0000212363" description="Gamma-aminobutyric acid receptor-associated protein">
    <location>
        <begin position="1"/>
        <end position="116"/>
    </location>
</feature>
<feature type="propeptide" id="PRO_0000423065" description="Removed in mature form" evidence="8">
    <location>
        <position position="117"/>
    </location>
</feature>
<feature type="region of interest" description="Interaction with beta-tubulin" evidence="37">
    <location>
        <begin position="1"/>
        <end position="22"/>
    </location>
</feature>
<feature type="region of interest" description="Interaction with GPHN" evidence="2">
    <location>
        <begin position="36"/>
        <end position="117"/>
    </location>
</feature>
<feature type="region of interest" description="Interaction with GABRG2" evidence="37">
    <location>
        <begin position="36"/>
        <end position="68"/>
    </location>
</feature>
<feature type="region of interest" description="Interaction with LIR (LC3 nteracting Region) motif of ATG3" evidence="36 45">
    <location>
        <begin position="48"/>
        <end position="50"/>
    </location>
</feature>
<feature type="site" description="Interaction with LIR (LC3 nteracting Region) motif of ATG3" evidence="36 45">
    <location>
        <position position="17"/>
    </location>
</feature>
<feature type="site" description="Interaction with LIR (LC3 nteracting Region) motif of ATG3" evidence="36 45">
    <location>
        <position position="28"/>
    </location>
</feature>
<feature type="site" description="Cleavage; by ATG4B" evidence="8">
    <location>
        <begin position="116"/>
        <end position="117"/>
    </location>
</feature>
<feature type="lipid moiety-binding region" description="Phosphatidylethanolamine amidated glycine; alternate" evidence="7 33">
    <location>
        <position position="116"/>
    </location>
</feature>
<feature type="lipid moiety-binding region" description="Phosphatidylserine amidated glycine; alternate" evidence="33">
    <location>
        <position position="116"/>
    </location>
</feature>
<feature type="mutagenesis site" description="No effect on WDFY3-binding. Impaired WDFY3-binding, but no effect on SQSTM1-binding; when associated with H-25 and H-54." evidence="22">
    <original>K</original>
    <variation>Q</variation>
    <location>
        <position position="24"/>
    </location>
</feature>
<feature type="mutagenesis site" description="No effect on WDFY3-binding. Impaired WDFY3-binding, but no effect on SQSTM1-binding; when associated with Q-24 and H-54." evidence="22">
    <original>Y</original>
    <variation>H</variation>
    <location>
        <position position="25"/>
    </location>
</feature>
<feature type="mutagenesis site" description="Inhibits interaction with TECPR2." evidence="13">
    <original>YL</original>
    <variation>AA</variation>
    <location>
        <begin position="49"/>
        <end position="50"/>
    </location>
</feature>
<feature type="mutagenesis site" description="No effect on WDFY3-binding. Impaired WDFY3-binding, but no effect on SQSTM1-binding; when associated with Q-24 and H-25." evidence="22">
    <original>D</original>
    <variation>H</variation>
    <location>
        <position position="54"/>
    </location>
</feature>
<feature type="mutagenesis site" description="No effect on interaction with TECPR2." evidence="13">
    <original>R</original>
    <variation>A</variation>
    <location>
        <position position="67"/>
    </location>
</feature>
<feature type="mutagenesis site" description="Impairs localization at the autophagosomal membrane." evidence="8">
    <original>G</original>
    <variation>A</variation>
    <location>
        <position position="116"/>
    </location>
</feature>
<feature type="helix" evidence="47">
    <location>
        <begin position="4"/>
        <end position="8"/>
    </location>
</feature>
<feature type="helix" evidence="47">
    <location>
        <begin position="11"/>
        <end position="24"/>
    </location>
</feature>
<feature type="strand" evidence="47">
    <location>
        <begin position="28"/>
        <end position="35"/>
    </location>
</feature>
<feature type="strand" evidence="47">
    <location>
        <begin position="48"/>
        <end position="52"/>
    </location>
</feature>
<feature type="helix" evidence="47">
    <location>
        <begin position="57"/>
        <end position="67"/>
    </location>
</feature>
<feature type="strand" evidence="49">
    <location>
        <begin position="72"/>
        <end position="74"/>
    </location>
</feature>
<feature type="strand" evidence="47">
    <location>
        <begin position="77"/>
        <end position="80"/>
    </location>
</feature>
<feature type="strand" evidence="48">
    <location>
        <begin position="87"/>
        <end position="90"/>
    </location>
</feature>
<feature type="helix" evidence="47">
    <location>
        <begin position="91"/>
        <end position="98"/>
    </location>
</feature>
<feature type="strand" evidence="46">
    <location>
        <begin position="101"/>
        <end position="103"/>
    </location>
</feature>
<feature type="strand" evidence="47">
    <location>
        <begin position="105"/>
        <end position="114"/>
    </location>
</feature>
<organism>
    <name type="scientific">Homo sapiens</name>
    <name type="common">Human</name>
    <dbReference type="NCBI Taxonomy" id="9606"/>
    <lineage>
        <taxon>Eukaryota</taxon>
        <taxon>Metazoa</taxon>
        <taxon>Chordata</taxon>
        <taxon>Craniata</taxon>
        <taxon>Vertebrata</taxon>
        <taxon>Euteleostomi</taxon>
        <taxon>Mammalia</taxon>
        <taxon>Eutheria</taxon>
        <taxon>Euarchontoglires</taxon>
        <taxon>Primates</taxon>
        <taxon>Haplorrhini</taxon>
        <taxon>Catarrhini</taxon>
        <taxon>Hominidae</taxon>
        <taxon>Homo</taxon>
    </lineage>
</organism>
<gene>
    <name evidence="39" type="primary">GABARAP</name>
    <name type="synonym">FLC3B</name>
    <name type="ORF">HT004</name>
</gene>
<dbReference type="EMBL" id="AF161586">
    <property type="protein sequence ID" value="AAD47641.1"/>
    <property type="molecule type" value="mRNA"/>
</dbReference>
<dbReference type="EMBL" id="AB030711">
    <property type="protein sequence ID" value="BAB21549.1"/>
    <property type="molecule type" value="mRNA"/>
</dbReference>
<dbReference type="EMBL" id="AF044671">
    <property type="protein sequence ID" value="AAD02337.1"/>
    <property type="molecule type" value="mRNA"/>
</dbReference>
<dbReference type="EMBL" id="AF067171">
    <property type="protein sequence ID" value="AAD32455.1"/>
    <property type="molecule type" value="mRNA"/>
</dbReference>
<dbReference type="EMBL" id="AF183425">
    <property type="protein sequence ID" value="AAG09694.1"/>
    <property type="molecule type" value="mRNA"/>
</dbReference>
<dbReference type="CCDS" id="CCDS11092.1"/>
<dbReference type="RefSeq" id="NP_009209.1">
    <property type="nucleotide sequence ID" value="NM_007278.2"/>
</dbReference>
<dbReference type="PDB" id="1GNU">
    <property type="method" value="X-ray"/>
    <property type="resolution" value="1.75 A"/>
    <property type="chains" value="A=1-117"/>
</dbReference>
<dbReference type="PDB" id="1KLV">
    <property type="method" value="NMR"/>
    <property type="chains" value="A=1-117"/>
</dbReference>
<dbReference type="PDB" id="1KM7">
    <property type="method" value="NMR"/>
    <property type="chains" value="A=1-117"/>
</dbReference>
<dbReference type="PDB" id="1KOT">
    <property type="method" value="NMR"/>
    <property type="chains" value="A=1-117"/>
</dbReference>
<dbReference type="PDB" id="3D32">
    <property type="method" value="X-ray"/>
    <property type="resolution" value="1.30 A"/>
    <property type="chains" value="A/B=1-117"/>
</dbReference>
<dbReference type="PDB" id="3DOW">
    <property type="method" value="X-ray"/>
    <property type="resolution" value="2.30 A"/>
    <property type="chains" value="A=1-117"/>
</dbReference>
<dbReference type="PDB" id="3WIM">
    <property type="method" value="X-ray"/>
    <property type="resolution" value="2.60 A"/>
    <property type="chains" value="A=1-117"/>
</dbReference>
<dbReference type="PDB" id="4XC2">
    <property type="method" value="X-ray"/>
    <property type="resolution" value="1.90 A"/>
    <property type="chains" value="A/B/C/D=3-116"/>
</dbReference>
<dbReference type="PDB" id="5DPS">
    <property type="method" value="X-ray"/>
    <property type="resolution" value="2.00 A"/>
    <property type="chains" value="A/B/C=2-117"/>
</dbReference>
<dbReference type="PDB" id="6HB9">
    <property type="method" value="X-ray"/>
    <property type="resolution" value="1.30 A"/>
    <property type="chains" value="A=3-116"/>
</dbReference>
<dbReference type="PDB" id="6HOG">
    <property type="method" value="X-ray"/>
    <property type="resolution" value="1.26 A"/>
    <property type="chains" value="A=2-112"/>
</dbReference>
<dbReference type="PDB" id="6HOH">
    <property type="method" value="X-ray"/>
    <property type="resolution" value="2.25 A"/>
    <property type="chains" value="A/B/C/D=2-112"/>
</dbReference>
<dbReference type="PDB" id="6HOJ">
    <property type="method" value="X-ray"/>
    <property type="resolution" value="1.51 A"/>
    <property type="chains" value="A/B/C=1-112"/>
</dbReference>
<dbReference type="PDB" id="6HOK">
    <property type="method" value="X-ray"/>
    <property type="resolution" value="1.61 A"/>
    <property type="chains" value="A=1-112"/>
</dbReference>
<dbReference type="PDB" id="6HYL">
    <property type="method" value="X-ray"/>
    <property type="resolution" value="1.56 A"/>
    <property type="chains" value="A/B=1-117"/>
</dbReference>
<dbReference type="PDB" id="6HYM">
    <property type="method" value="X-ray"/>
    <property type="resolution" value="1.86 A"/>
    <property type="chains" value="A/B=1-117"/>
</dbReference>
<dbReference type="PDB" id="6HYN">
    <property type="method" value="X-ray"/>
    <property type="resolution" value="1.14 A"/>
    <property type="chains" value="A=1-117"/>
</dbReference>
<dbReference type="PDB" id="6HYO">
    <property type="method" value="X-ray"/>
    <property type="resolution" value="1.07 A"/>
    <property type="chains" value="A=1-117"/>
</dbReference>
<dbReference type="PDB" id="6YOP">
    <property type="method" value="X-ray"/>
    <property type="resolution" value="1.10 A"/>
    <property type="chains" value="A=1-117"/>
</dbReference>
<dbReference type="PDB" id="7AA8">
    <property type="method" value="X-ray"/>
    <property type="resolution" value="1.25 A"/>
    <property type="chains" value="C=1-117"/>
</dbReference>
<dbReference type="PDB" id="7BRQ">
    <property type="method" value="X-ray"/>
    <property type="resolution" value="1.40 A"/>
    <property type="chains" value="A=1-116"/>
</dbReference>
<dbReference type="PDB" id="7BRT">
    <property type="method" value="X-ray"/>
    <property type="resolution" value="2.00 A"/>
    <property type="chains" value="A/B=1-116"/>
</dbReference>
<dbReference type="PDB" id="7BRU">
    <property type="method" value="X-ray"/>
    <property type="resolution" value="2.15 A"/>
    <property type="chains" value="A/B/C=1-116"/>
</dbReference>
<dbReference type="PDB" id="7BV4">
    <property type="method" value="X-ray"/>
    <property type="resolution" value="2.00 A"/>
    <property type="chains" value="A/B/E/G=1-117"/>
</dbReference>
<dbReference type="PDB" id="7EA7">
    <property type="method" value="X-ray"/>
    <property type="resolution" value="2.69 A"/>
    <property type="chains" value="A/B=1-117"/>
</dbReference>
<dbReference type="PDB" id="7LSW">
    <property type="method" value="X-ray"/>
    <property type="resolution" value="3.05 A"/>
    <property type="chains" value="A/B/C/D/E/F=1-117"/>
</dbReference>
<dbReference type="PDB" id="7LT6">
    <property type="method" value="X-ray"/>
    <property type="resolution" value="1.80 A"/>
    <property type="chains" value="A/B/C=1-117"/>
</dbReference>
<dbReference type="PDB" id="7VEC">
    <property type="method" value="X-ray"/>
    <property type="resolution" value="3.00 A"/>
    <property type="chains" value="A/B/C/D/E/F/G/H/I/J/K/L=1-116"/>
</dbReference>
<dbReference type="PDB" id="7VED">
    <property type="method" value="X-ray"/>
    <property type="resolution" value="2.02 A"/>
    <property type="chains" value="A/B=1-116"/>
</dbReference>
<dbReference type="PDB" id="7YO9">
    <property type="method" value="X-ray"/>
    <property type="resolution" value="1.75 A"/>
    <property type="chains" value="A=1-116"/>
</dbReference>
<dbReference type="PDB" id="7ZKR">
    <property type="method" value="X-ray"/>
    <property type="resolution" value="1.10 A"/>
    <property type="chains" value="A=1-117"/>
</dbReference>
<dbReference type="PDB" id="7ZL7">
    <property type="method" value="X-ray"/>
    <property type="resolution" value="1.55 A"/>
    <property type="chains" value="A/C=1-117"/>
</dbReference>
<dbReference type="PDB" id="8AFI">
    <property type="method" value="X-ray"/>
    <property type="resolution" value="2.66 A"/>
    <property type="chains" value="A/C/E/G/I/K/M/O=2-116"/>
</dbReference>
<dbReference type="PDB" id="8S1M">
    <property type="method" value="X-ray"/>
    <property type="resolution" value="2.05 A"/>
    <property type="chains" value="A=1-117"/>
</dbReference>
<dbReference type="PDB" id="8T2M">
    <property type="method" value="X-ray"/>
    <property type="resolution" value="1.27 A"/>
    <property type="chains" value="A=1-117"/>
</dbReference>
<dbReference type="PDB" id="8T2N">
    <property type="method" value="X-ray"/>
    <property type="resolution" value="1.88 A"/>
    <property type="chains" value="A/C=1-117"/>
</dbReference>
<dbReference type="PDB" id="8T31">
    <property type="method" value="X-ray"/>
    <property type="resolution" value="2.10 A"/>
    <property type="chains" value="A/C/E/G/I=1-117"/>
</dbReference>
<dbReference type="PDB" id="8T32">
    <property type="method" value="X-ray"/>
    <property type="resolution" value="2.05 A"/>
    <property type="chains" value="A=1-117"/>
</dbReference>
<dbReference type="PDB" id="8T33">
    <property type="method" value="X-ray"/>
    <property type="resolution" value="1.60 A"/>
    <property type="chains" value="A=1-117"/>
</dbReference>
<dbReference type="PDB" id="8W6A">
    <property type="method" value="X-ray"/>
    <property type="resolution" value="1.53 A"/>
    <property type="chains" value="A/B/D/G=1-117"/>
</dbReference>
<dbReference type="PDBsum" id="1GNU"/>
<dbReference type="PDBsum" id="1KLV"/>
<dbReference type="PDBsum" id="1KM7"/>
<dbReference type="PDBsum" id="1KOT"/>
<dbReference type="PDBsum" id="3D32"/>
<dbReference type="PDBsum" id="3DOW"/>
<dbReference type="PDBsum" id="3WIM"/>
<dbReference type="PDBsum" id="4XC2"/>
<dbReference type="PDBsum" id="5DPS"/>
<dbReference type="PDBsum" id="6HB9"/>
<dbReference type="PDBsum" id="6HOG"/>
<dbReference type="PDBsum" id="6HOH"/>
<dbReference type="PDBsum" id="6HOJ"/>
<dbReference type="PDBsum" id="6HOK"/>
<dbReference type="PDBsum" id="6HYL"/>
<dbReference type="PDBsum" id="6HYM"/>
<dbReference type="PDBsum" id="6HYN"/>
<dbReference type="PDBsum" id="6HYO"/>
<dbReference type="PDBsum" id="6YOP"/>
<dbReference type="PDBsum" id="7AA8"/>
<dbReference type="PDBsum" id="7BRQ"/>
<dbReference type="PDBsum" id="7BRT"/>
<dbReference type="PDBsum" id="7BRU"/>
<dbReference type="PDBsum" id="7BV4"/>
<dbReference type="PDBsum" id="7EA7"/>
<dbReference type="PDBsum" id="7LSW"/>
<dbReference type="PDBsum" id="7LT6"/>
<dbReference type="PDBsum" id="7VEC"/>
<dbReference type="PDBsum" id="7VED"/>
<dbReference type="PDBsum" id="7YO9"/>
<dbReference type="PDBsum" id="7ZKR"/>
<dbReference type="PDBsum" id="7ZL7"/>
<dbReference type="PDBsum" id="8AFI"/>
<dbReference type="PDBsum" id="8S1M"/>
<dbReference type="PDBsum" id="8T2M"/>
<dbReference type="PDBsum" id="8T2N"/>
<dbReference type="PDBsum" id="8T31"/>
<dbReference type="PDBsum" id="8T32"/>
<dbReference type="PDBsum" id="8T33"/>
<dbReference type="PDBsum" id="8W6A"/>
<dbReference type="BMRB" id="O95166"/>
<dbReference type="SMR" id="O95166"/>
<dbReference type="BioGRID" id="116465">
    <property type="interactions" value="130"/>
</dbReference>
<dbReference type="DIP" id="DIP-35050N"/>
<dbReference type="ELM" id="O95166"/>
<dbReference type="FunCoup" id="O95166">
    <property type="interactions" value="2353"/>
</dbReference>
<dbReference type="IntAct" id="O95166">
    <property type="interactions" value="506"/>
</dbReference>
<dbReference type="MINT" id="O95166"/>
<dbReference type="STRING" id="9606.ENSP00000306866"/>
<dbReference type="ChEMBL" id="CHEMBL4879423"/>
<dbReference type="MoonDB" id="O95166">
    <property type="type" value="Predicted"/>
</dbReference>
<dbReference type="TCDB" id="1.A.9.5.2">
    <property type="family name" value="the neurotransmitter receptor, cys loop, ligand-gated ion channel (lic) family"/>
</dbReference>
<dbReference type="GlyGen" id="O95166">
    <property type="glycosylation" value="1 site"/>
</dbReference>
<dbReference type="iPTMnet" id="O95166"/>
<dbReference type="PhosphoSitePlus" id="O95166"/>
<dbReference type="BioMuta" id="GABARAP"/>
<dbReference type="jPOST" id="O95166"/>
<dbReference type="MassIVE" id="O95166"/>
<dbReference type="PaxDb" id="9606-ENSP00000306866"/>
<dbReference type="PeptideAtlas" id="O95166"/>
<dbReference type="ProteomicsDB" id="50679"/>
<dbReference type="Pumba" id="O95166"/>
<dbReference type="Antibodypedia" id="11841">
    <property type="antibodies" value="686 antibodies from 37 providers"/>
</dbReference>
<dbReference type="DNASU" id="11337"/>
<dbReference type="Ensembl" id="ENST00000302386.10">
    <property type="protein sequence ID" value="ENSP00000306866.5"/>
    <property type="gene ID" value="ENSG00000170296.10"/>
</dbReference>
<dbReference type="GeneID" id="11337"/>
<dbReference type="KEGG" id="hsa:11337"/>
<dbReference type="MANE-Select" id="ENST00000302386.10">
    <property type="protein sequence ID" value="ENSP00000306866.5"/>
    <property type="RefSeq nucleotide sequence ID" value="NM_007278.2"/>
    <property type="RefSeq protein sequence ID" value="NP_009209.1"/>
</dbReference>
<dbReference type="AGR" id="HGNC:4067"/>
<dbReference type="CTD" id="11337"/>
<dbReference type="DisGeNET" id="11337"/>
<dbReference type="GeneCards" id="GABARAP"/>
<dbReference type="HGNC" id="HGNC:4067">
    <property type="gene designation" value="GABARAP"/>
</dbReference>
<dbReference type="HPA" id="ENSG00000170296">
    <property type="expression patterns" value="Low tissue specificity"/>
</dbReference>
<dbReference type="MIM" id="605125">
    <property type="type" value="gene"/>
</dbReference>
<dbReference type="neXtProt" id="NX_O95166"/>
<dbReference type="OpenTargets" id="ENSG00000170296"/>
<dbReference type="PharmGKB" id="PA28480"/>
<dbReference type="VEuPathDB" id="HostDB:ENSG00000170296"/>
<dbReference type="eggNOG" id="KOG1654">
    <property type="taxonomic scope" value="Eukaryota"/>
</dbReference>
<dbReference type="GeneTree" id="ENSGT00940000157496"/>
<dbReference type="HOGENOM" id="CLU_119276_0_0_1"/>
<dbReference type="InParanoid" id="O95166"/>
<dbReference type="OMA" id="AVYQEHK"/>
<dbReference type="OrthoDB" id="6738456at2759"/>
<dbReference type="PAN-GO" id="O95166">
    <property type="GO annotations" value="9 GO annotations based on evolutionary models"/>
</dbReference>
<dbReference type="PhylomeDB" id="O95166"/>
<dbReference type="TreeFam" id="TF314556"/>
<dbReference type="PathwayCommons" id="O95166"/>
<dbReference type="Reactome" id="R-HSA-1632852">
    <property type="pathway name" value="Macroautophagy"/>
</dbReference>
<dbReference type="Reactome" id="R-HSA-8854214">
    <property type="pathway name" value="TBC/RABGAPs"/>
</dbReference>
<dbReference type="SABIO-RK" id="O95166"/>
<dbReference type="SignaLink" id="O95166"/>
<dbReference type="SIGNOR" id="O95166"/>
<dbReference type="BioGRID-ORCS" id="11337">
    <property type="hits" value="68 hits in 1158 CRISPR screens"/>
</dbReference>
<dbReference type="ChiTaRS" id="GABARAP">
    <property type="organism name" value="human"/>
</dbReference>
<dbReference type="EvolutionaryTrace" id="O95166"/>
<dbReference type="GeneWiki" id="GABARAP"/>
<dbReference type="GenomeRNAi" id="11337"/>
<dbReference type="Pharos" id="O95166">
    <property type="development level" value="Tbio"/>
</dbReference>
<dbReference type="PRO" id="PR:O95166"/>
<dbReference type="Proteomes" id="UP000005640">
    <property type="component" value="Chromosome 17"/>
</dbReference>
<dbReference type="RNAct" id="O95166">
    <property type="molecule type" value="protein"/>
</dbReference>
<dbReference type="Bgee" id="ENSG00000170296">
    <property type="expression patterns" value="Expressed in right testis and 97 other cell types or tissues"/>
</dbReference>
<dbReference type="ExpressionAtlas" id="O95166">
    <property type="expression patterns" value="baseline and differential"/>
</dbReference>
<dbReference type="GO" id="GO:0015629">
    <property type="term" value="C:actin cytoskeleton"/>
    <property type="evidence" value="ECO:0007669"/>
    <property type="project" value="Ensembl"/>
</dbReference>
<dbReference type="GO" id="GO:0005776">
    <property type="term" value="C:autophagosome"/>
    <property type="evidence" value="ECO:0000314"/>
    <property type="project" value="UniProtKB"/>
</dbReference>
<dbReference type="GO" id="GO:0000421">
    <property type="term" value="C:autophagosome membrane"/>
    <property type="evidence" value="ECO:0000314"/>
    <property type="project" value="UniProtKB"/>
</dbReference>
<dbReference type="GO" id="GO:0005930">
    <property type="term" value="C:axoneme"/>
    <property type="evidence" value="ECO:0000250"/>
    <property type="project" value="UniProtKB"/>
</dbReference>
<dbReference type="GO" id="GO:0031410">
    <property type="term" value="C:cytoplasmic vesicle"/>
    <property type="evidence" value="ECO:0007669"/>
    <property type="project" value="UniProtKB-KW"/>
</dbReference>
<dbReference type="GO" id="GO:0005829">
    <property type="term" value="C:cytosol"/>
    <property type="evidence" value="ECO:0000304"/>
    <property type="project" value="Reactome"/>
</dbReference>
<dbReference type="GO" id="GO:0098982">
    <property type="term" value="C:GABA-ergic synapse"/>
    <property type="evidence" value="ECO:0007669"/>
    <property type="project" value="Ensembl"/>
</dbReference>
<dbReference type="GO" id="GO:0000139">
    <property type="term" value="C:Golgi membrane"/>
    <property type="evidence" value="ECO:0007669"/>
    <property type="project" value="UniProtKB-SubCell"/>
</dbReference>
<dbReference type="GO" id="GO:0043231">
    <property type="term" value="C:intracellular membrane-bounded organelle"/>
    <property type="evidence" value="ECO:0000314"/>
    <property type="project" value="HPA"/>
</dbReference>
<dbReference type="GO" id="GO:0005764">
    <property type="term" value="C:lysosome"/>
    <property type="evidence" value="ECO:0007669"/>
    <property type="project" value="Ensembl"/>
</dbReference>
<dbReference type="GO" id="GO:0005874">
    <property type="term" value="C:microtubule"/>
    <property type="evidence" value="ECO:0007669"/>
    <property type="project" value="UniProtKB-KW"/>
</dbReference>
<dbReference type="GO" id="GO:0005875">
    <property type="term" value="C:microtubule associated complex"/>
    <property type="evidence" value="ECO:0007669"/>
    <property type="project" value="Ensembl"/>
</dbReference>
<dbReference type="GO" id="GO:0005886">
    <property type="term" value="C:plasma membrane"/>
    <property type="evidence" value="ECO:0000304"/>
    <property type="project" value="ProtInc"/>
</dbReference>
<dbReference type="GO" id="GO:0005790">
    <property type="term" value="C:smooth endoplasmic reticulum"/>
    <property type="evidence" value="ECO:0007669"/>
    <property type="project" value="Ensembl"/>
</dbReference>
<dbReference type="GO" id="GO:0097225">
    <property type="term" value="C:sperm midpiece"/>
    <property type="evidence" value="ECO:0007669"/>
    <property type="project" value="Ensembl"/>
</dbReference>
<dbReference type="GO" id="GO:0048487">
    <property type="term" value="F:beta-tubulin binding"/>
    <property type="evidence" value="ECO:0000314"/>
    <property type="project" value="UniProtKB"/>
</dbReference>
<dbReference type="GO" id="GO:0050811">
    <property type="term" value="F:GABA receptor binding"/>
    <property type="evidence" value="ECO:0000353"/>
    <property type="project" value="UniProtKB"/>
</dbReference>
<dbReference type="GO" id="GO:0008017">
    <property type="term" value="F:microtubule binding"/>
    <property type="evidence" value="ECO:0007669"/>
    <property type="project" value="Ensembl"/>
</dbReference>
<dbReference type="GO" id="GO:0008429">
    <property type="term" value="F:phosphatidylethanolamine binding"/>
    <property type="evidence" value="ECO:0000314"/>
    <property type="project" value="UniProt"/>
</dbReference>
<dbReference type="GO" id="GO:0031625">
    <property type="term" value="F:ubiquitin protein ligase binding"/>
    <property type="evidence" value="ECO:0000353"/>
    <property type="project" value="UniProtKB"/>
</dbReference>
<dbReference type="GO" id="GO:0000045">
    <property type="term" value="P:autophagosome assembly"/>
    <property type="evidence" value="ECO:0000318"/>
    <property type="project" value="GO_Central"/>
</dbReference>
<dbReference type="GO" id="GO:0097352">
    <property type="term" value="P:autophagosome maturation"/>
    <property type="evidence" value="ECO:0000318"/>
    <property type="project" value="GO_Central"/>
</dbReference>
<dbReference type="GO" id="GO:0006995">
    <property type="term" value="P:cellular response to nitrogen starvation"/>
    <property type="evidence" value="ECO:0000318"/>
    <property type="project" value="GO_Central"/>
</dbReference>
<dbReference type="GO" id="GO:0007268">
    <property type="term" value="P:chemical synaptic transmission"/>
    <property type="evidence" value="ECO:0000304"/>
    <property type="project" value="ProtInc"/>
</dbReference>
<dbReference type="GO" id="GO:0008625">
    <property type="term" value="P:extrinsic apoptotic signaling pathway via death domain receptors"/>
    <property type="evidence" value="ECO:0000314"/>
    <property type="project" value="UniProtKB"/>
</dbReference>
<dbReference type="GO" id="GO:0000226">
    <property type="term" value="P:microtubule cytoskeleton organization"/>
    <property type="evidence" value="ECO:0007669"/>
    <property type="project" value="Ensembl"/>
</dbReference>
<dbReference type="GO" id="GO:0000423">
    <property type="term" value="P:mitophagy"/>
    <property type="evidence" value="ECO:0000318"/>
    <property type="project" value="GO_Central"/>
</dbReference>
<dbReference type="GO" id="GO:0032436">
    <property type="term" value="P:positive regulation of proteasomal ubiquitin-dependent protein catabolic process"/>
    <property type="evidence" value="ECO:0000315"/>
    <property type="project" value="UniProtKB"/>
</dbReference>
<dbReference type="GO" id="GO:1902524">
    <property type="term" value="P:positive regulation of protein K48-linked ubiquitination"/>
    <property type="evidence" value="ECO:0000315"/>
    <property type="project" value="UniProtKB"/>
</dbReference>
<dbReference type="GO" id="GO:0006605">
    <property type="term" value="P:protein targeting"/>
    <property type="evidence" value="ECO:0000304"/>
    <property type="project" value="ProtInc"/>
</dbReference>
<dbReference type="GO" id="GO:0015031">
    <property type="term" value="P:protein transport"/>
    <property type="evidence" value="ECO:0007669"/>
    <property type="project" value="UniProtKB-KW"/>
</dbReference>
<dbReference type="GO" id="GO:0098696">
    <property type="term" value="P:regulation of neurotransmitter receptor localization to postsynaptic specialization membrane"/>
    <property type="evidence" value="ECO:0007669"/>
    <property type="project" value="Ensembl"/>
</dbReference>
<dbReference type="GO" id="GO:0035020">
    <property type="term" value="P:regulation of Rac protein signal transduction"/>
    <property type="evidence" value="ECO:0000315"/>
    <property type="project" value="UniProtKB"/>
</dbReference>
<dbReference type="CDD" id="cd17232">
    <property type="entry name" value="Ubl_ATG8_GABARAP"/>
    <property type="match status" value="1"/>
</dbReference>
<dbReference type="FunFam" id="3.10.20.90:FF:000037">
    <property type="entry name" value="Gamma-aminobutyric acid receptor-associated protein-like 1"/>
    <property type="match status" value="1"/>
</dbReference>
<dbReference type="Gene3D" id="3.10.20.90">
    <property type="entry name" value="Phosphatidylinositol 3-kinase Catalytic Subunit, Chain A, domain 1"/>
    <property type="match status" value="1"/>
</dbReference>
<dbReference type="InterPro" id="IPR004241">
    <property type="entry name" value="Atg8-like"/>
</dbReference>
<dbReference type="InterPro" id="IPR029071">
    <property type="entry name" value="Ubiquitin-like_domsf"/>
</dbReference>
<dbReference type="PANTHER" id="PTHR10969">
    <property type="entry name" value="MICROTUBULE-ASSOCIATED PROTEINS 1A/1B LIGHT CHAIN 3-RELATED"/>
    <property type="match status" value="1"/>
</dbReference>
<dbReference type="Pfam" id="PF02991">
    <property type="entry name" value="ATG8"/>
    <property type="match status" value="1"/>
</dbReference>
<dbReference type="SUPFAM" id="SSF54236">
    <property type="entry name" value="Ubiquitin-like"/>
    <property type="match status" value="1"/>
</dbReference>
<reference key="1">
    <citation type="journal article" date="1999" name="Nature">
        <title>GABA(A)-receptor-associated protein links GABA(A) receptors and the cytoskeleton.</title>
        <authorList>
            <person name="Wang H."/>
            <person name="Bedford F.K."/>
            <person name="Brandon N.J."/>
            <person name="Moss S.J."/>
            <person name="Olsen R.W."/>
        </authorList>
    </citation>
    <scope>NUCLEOTIDE SEQUENCE [MRNA]</scope>
    <scope>FUNCTION</scope>
    <scope>TISSUE SPECIFICITY</scope>
    <scope>INTERACTION WITH GABRG2 AND BETA-TUBULIN</scope>
    <source>
        <tissue>Brain</tissue>
    </source>
</reference>
<reference key="2">
    <citation type="journal article" date="2000" name="Brain Res. Mol. Brain Res.">
        <title>Interaction of the Unc-51-like kinase and microtubule-associated protein light chain 3 related proteins in the brain: possible role of vesicular transport in axonal elongation.</title>
        <authorList>
            <person name="Okazaki N."/>
            <person name="Yan J."/>
            <person name="Yuasa S."/>
            <person name="Ueno T."/>
            <person name="Kominami E."/>
            <person name="Masuho Y."/>
            <person name="Koga H."/>
            <person name="Muramatsu M.-A."/>
        </authorList>
    </citation>
    <scope>NUCLEOTIDE SEQUENCE [MRNA]</scope>
    <scope>TISSUE SPECIFICITY</scope>
    <scope>INTERACTION WITH ULK1</scope>
    <source>
        <tissue>Frontal cortex</tissue>
    </source>
</reference>
<reference key="3">
    <citation type="submission" date="1998-01" db="EMBL/GenBank/DDBJ databases">
        <authorList>
            <person name="Iijima M."/>
            <person name="Mitsui Y."/>
        </authorList>
    </citation>
    <scope>NUCLEOTIDE SEQUENCE [MRNA]</scope>
</reference>
<reference key="4">
    <citation type="submission" date="1998-05" db="EMBL/GenBank/DDBJ databases">
        <authorList>
            <person name="Ye M."/>
            <person name="Fu G."/>
            <person name="Wu J."/>
            <person name="Zhou J."/>
            <person name="Zhang Q."/>
            <person name="Shen Y."/>
            <person name="Kan L."/>
            <person name="He K."/>
            <person name="Gu B."/>
            <person name="Chen S."/>
            <person name="Mao M."/>
            <person name="Chen Z."/>
        </authorList>
    </citation>
    <scope>NUCLEOTIDE SEQUENCE [MRNA]</scope>
</reference>
<reference key="5">
    <citation type="journal article" date="2000" name="Proc. Natl. Acad. Sci. U.S.A.">
        <title>Gene expression profiling in the human hypothalamus-pituitary-adrenal axis and full-length cDNA cloning.</title>
        <authorList>
            <person name="Hu R.-M."/>
            <person name="Han Z.-G."/>
            <person name="Song H.-D."/>
            <person name="Peng Y.-D."/>
            <person name="Huang Q.-H."/>
            <person name="Ren S.-X."/>
            <person name="Gu Y.-J."/>
            <person name="Huang C.-H."/>
            <person name="Li Y.-B."/>
            <person name="Jiang C.-L."/>
            <person name="Fu G."/>
            <person name="Zhang Q.-H."/>
            <person name="Gu B.-W."/>
            <person name="Dai M."/>
            <person name="Mao Y.-F."/>
            <person name="Gao G.-F."/>
            <person name="Rong R."/>
            <person name="Ye M."/>
            <person name="Zhou J."/>
            <person name="Xu S.-H."/>
            <person name="Gu J."/>
            <person name="Shi J.-X."/>
            <person name="Jin W.-R."/>
            <person name="Zhang C.-K."/>
            <person name="Wu T.-M."/>
            <person name="Huang G.-Y."/>
            <person name="Chen Z."/>
            <person name="Chen M.-D."/>
            <person name="Chen J.-L."/>
        </authorList>
    </citation>
    <scope>NUCLEOTIDE SEQUENCE [LARGE SCALE MRNA]</scope>
    <source>
        <tissue>Hypothalamus</tissue>
    </source>
</reference>
<reference key="6">
    <citation type="journal article" date="2001" name="J. Biol. Chem.">
        <title>The human homolog of Saccharomyces cerevisiae Apg7p is a Protein-activating enzyme for multiple substrates including human Apg12p, GATE-16, GABARAP, and MAP-LC3.</title>
        <authorList>
            <person name="Tanida I."/>
            <person name="Tanida-Miyake E."/>
            <person name="Ueno T."/>
            <person name="Kominami E."/>
        </authorList>
    </citation>
    <scope>INTERACTION WITH ATG7</scope>
</reference>
<reference key="7">
    <citation type="journal article" date="2002" name="J. Biol. Chem.">
        <title>Human Apg3p/Aut1p homologue is an authentic E2 enzyme for multiple substrates, GATE-16, GABARAP, and MAP-LC3, and facilitates the conjugation of hApg12p to hApg5p.</title>
        <authorList>
            <person name="Tanida I."/>
            <person name="Tanida-Miyake E."/>
            <person name="Komatsu M."/>
            <person name="Ueno T."/>
            <person name="Kominami E."/>
        </authorList>
    </citation>
    <scope>INTERACTION WITH ATG3</scope>
</reference>
<reference key="8">
    <citation type="journal article" date="2003" name="Biochem. Biophys. Res. Commun.">
        <title>GATE-16 and GABARAP are authentic modifiers mediated by Apg7 and Apg3.</title>
        <authorList>
            <person name="Tanida I."/>
            <person name="Komatsu M."/>
            <person name="Ueno T."/>
            <person name="Kominami E."/>
        </authorList>
    </citation>
    <scope>LIPIDATION AT GLY-116</scope>
    <scope>INTERACTION WITH ATG3 AND ATG7</scope>
    <scope>SUBCELLULAR LOCATION</scope>
</reference>
<reference key="9">
    <citation type="journal article" date="2004" name="J. Cell Sci.">
        <title>LC3, GABARAP and GATE16 localize to autophagosomal membrane depending on form-II formation.</title>
        <authorList>
            <person name="Kabeya Y."/>
            <person name="Mizushima N."/>
            <person name="Yamamoto A."/>
            <person name="Oshitani-Okamoto S."/>
            <person name="Ohsumi Y."/>
            <person name="Yoshimori T."/>
        </authorList>
    </citation>
    <scope>FUNCTION</scope>
    <scope>CLEAVAGE</scope>
    <scope>SUBCELLULAR LOCATION</scope>
    <scope>MUTAGENESIS OF GLY-116</scope>
</reference>
<reference key="10">
    <citation type="journal article" date="2005" name="Biotechnol. Lett.">
        <title>GABAA receptor-associated protein (GABARAP) induces apoptosis by interacting with DEAD (Asp-Glu-Ala-Asp/His) box polypeptide 47 (DDX 47).</title>
        <authorList>
            <person name="Lee J.H."/>
            <person name="Rho S.B."/>
            <person name="Chun T."/>
        </authorList>
    </citation>
    <scope>FUNCTION</scope>
    <scope>INTERACTION WITH DDX47</scope>
</reference>
<reference key="11">
    <citation type="journal article" date="2007" name="J. Biol. Chem.">
        <title>p62/SQSTM1 binds directly to Atg8/LC3 to facilitate degradation of ubiquitinated protein aggregates by autophagy.</title>
        <authorList>
            <person name="Pankiv S."/>
            <person name="Clausen T.H."/>
            <person name="Lamark T."/>
            <person name="Brech A."/>
            <person name="Bruun J.A."/>
            <person name="Outzen H."/>
            <person name="Overvatn A."/>
            <person name="Bjorkoy G."/>
            <person name="Johansen T."/>
        </authorList>
    </citation>
    <scope>INTERACTION WITH SQSTM1</scope>
    <scope>SUBCELLULAR LOCATION</scope>
</reference>
<reference key="12">
    <citation type="journal article" date="2009" name="Mol. Biol. Cell">
        <title>The TP53INP2 protein is required for autophagy in mammalian cells.</title>
        <authorList>
            <person name="Nowak J."/>
            <person name="Archange C."/>
            <person name="Tardivel-Lacombe J."/>
            <person name="Pontarotti P."/>
            <person name="Pebusque M.J."/>
            <person name="Vaccaro M.I."/>
            <person name="Velasco G."/>
            <person name="Dagorn J.C."/>
            <person name="Iovanna J.L."/>
        </authorList>
    </citation>
    <scope>SUBCELLULAR LOCATION</scope>
    <scope>INTERACTION WITH TP53INP2</scope>
</reference>
<reference key="13">
    <citation type="journal article" date="2010" name="Autophagy">
        <title>Synthetic substrates for measuring activity of autophagy proteases: autophagins (Atg4).</title>
        <authorList>
            <person name="Shu C.W."/>
            <person name="Drag M."/>
            <person name="Bekes M."/>
            <person name="Zhai D."/>
            <person name="Salvesen G.S."/>
            <person name="Reed J.C."/>
        </authorList>
    </citation>
    <scope>CLEAVAGE BY ATG4B</scope>
</reference>
<reference key="14">
    <citation type="journal article" date="2010" name="Nature">
        <title>Network organization of the human autophagy system.</title>
        <authorList>
            <person name="Behrends C."/>
            <person name="Sowa M.E."/>
            <person name="Gygi S.P."/>
            <person name="Harper J.W."/>
        </authorList>
    </citation>
    <scope>FUNCTION</scope>
    <scope>INTERACTION WITH TECPR2</scope>
    <scope>MUTAGENESIS OF 49-TYR-LEU-50 AND ARG-67</scope>
</reference>
<reference key="15">
    <citation type="journal article" date="2011" name="BMC Syst. Biol.">
        <title>Initial characterization of the human central proteome.</title>
        <authorList>
            <person name="Burkard T.R."/>
            <person name="Planyavsky M."/>
            <person name="Kaupe I."/>
            <person name="Breitwieser F.P."/>
            <person name="Buerckstuemmer T."/>
            <person name="Bennett K.L."/>
            <person name="Superti-Furga G."/>
            <person name="Colinge J."/>
        </authorList>
    </citation>
    <scope>IDENTIFICATION BY MASS SPECTROMETRY [LARGE SCALE ANALYSIS]</scope>
</reference>
<reference key="16">
    <citation type="journal article" date="2011" name="J. Cell Biol.">
        <title>OATL1, a novel autophagosome-resident Rab33B-GAP, regulates autophagosomal maturation.</title>
        <authorList>
            <person name="Itoh T."/>
            <person name="Kanno E."/>
            <person name="Uemura T."/>
            <person name="Waguri S."/>
            <person name="Fukuda M."/>
        </authorList>
    </citation>
    <scope>INTERACTION WITH TBC1D25</scope>
</reference>
<reference key="17">
    <citation type="journal article" date="2012" name="Autophagy">
        <title>MAPK15/ERK8 stimulates autophagy by interacting with LC3 and GABARAP proteins.</title>
        <authorList>
            <person name="Colecchia D."/>
            <person name="Strambi A."/>
            <person name="Sanzone S."/>
            <person name="Iavarone C."/>
            <person name="Rossi M."/>
            <person name="Dall'Armi C."/>
            <person name="Piccioni F."/>
            <person name="Verrotti di Pianella A."/>
            <person name="Chiariello M."/>
        </authorList>
    </citation>
    <scope>FUNCTION</scope>
    <scope>INTERACTION WITH MAPK15</scope>
</reference>
<reference key="18">
    <citation type="journal article" date="2012" name="Cell Death Differ.">
        <title>TP53INP1, a tumor suppressor, interacts with LC3 and ATG8-family proteins through the LC3-interacting region (LIR) and promotes autophagy-dependent cell death.</title>
        <authorList>
            <person name="Seillier M."/>
            <person name="Peuget S."/>
            <person name="Gayet O."/>
            <person name="Gauthier C."/>
            <person name="N'guessan P."/>
            <person name="Monte M."/>
            <person name="Carrier A."/>
            <person name="Iovanna J.L."/>
            <person name="Dusetti N.J."/>
        </authorList>
    </citation>
    <scope>INTERACTION WITH TP53INP1</scope>
</reference>
<reference key="19">
    <citation type="journal article" date="2012" name="J. Biol. Chem.">
        <title>ATG8 family proteins act as scaffolds for assembly of the ULK complex: sequence requirements for LC3-interacting region (LIR) motifs.</title>
        <authorList>
            <person name="Alemu E.A."/>
            <person name="Lamark T."/>
            <person name="Torgersen K.M."/>
            <person name="Birgisdottir A.B."/>
            <person name="Larsen K.B."/>
            <person name="Jain A."/>
            <person name="Olsvik H."/>
            <person name="Overvatn A."/>
            <person name="Kirkin V."/>
            <person name="Johansen T."/>
        </authorList>
    </citation>
    <scope>INTERACTION WITH ATG13; RB1CC1 AND ULK1</scope>
</reference>
<reference key="20">
    <citation type="journal article" date="2012" name="Mol. Cell. Biol.">
        <title>Rab GTPase-activating proteins in autophagy: regulation of endocytic and autophagy pathways by direct binding to human ATG8 modifiers.</title>
        <authorList>
            <person name="Popovic D."/>
            <person name="Akutsu M."/>
            <person name="Novak I."/>
            <person name="Harper J.W."/>
            <person name="Behrends C."/>
            <person name="Dikic I."/>
        </authorList>
    </citation>
    <scope>INTERACTION WITH TBC1D5</scope>
</reference>
<reference key="21">
    <citation type="journal article" date="2012" name="PLoS ONE">
        <title>DOR/Tp53inp2 and Tp53inp1 constitute a metazoan gene family encoding dual regulators of autophagy and transcription.</title>
        <authorList>
            <person name="Sancho A."/>
            <person name="Duran J."/>
            <person name="Garcia-Espana A."/>
            <person name="Mauvezin C."/>
            <person name="Alemu E.A."/>
            <person name="Lamark T."/>
            <person name="Macias M.J."/>
            <person name="Desalle R."/>
            <person name="Royo M."/>
            <person name="Sala D."/>
            <person name="Chicote J.U."/>
            <person name="Palacin M."/>
            <person name="Johansen T."/>
            <person name="Zorzano A."/>
        </authorList>
    </citation>
    <scope>INTERACTION WITH TP53INP1 AND TP53INP2</scope>
</reference>
<reference key="22">
    <citation type="journal article" date="2013" name="Nature">
        <title>Autophagy promotes primary ciliogenesis by removing OFD1 from centriolar satellites.</title>
        <authorList>
            <person name="Tang Z."/>
            <person name="Lin M.G."/>
            <person name="Stowe T.R."/>
            <person name="Chen S."/>
            <person name="Zhu M."/>
            <person name="Stearns T."/>
            <person name="Franco B."/>
            <person name="Zhong Q."/>
        </authorList>
    </citation>
    <scope>INTERACTION WITH PCM1</scope>
</reference>
<reference key="23">
    <citation type="journal article" date="2014" name="Autophagy">
        <title>FLCN, a novel autophagy component, interacts with GABARAP and is regulated by ULK1 phosphorylation.</title>
        <authorList>
            <person name="Dunlop E.A."/>
            <person name="Seifan S."/>
            <person name="Claessens T."/>
            <person name="Behrends C."/>
            <person name="Kamps M.A."/>
            <person name="Rozycka E."/>
            <person name="Kemp A.J."/>
            <person name="Nookala R.K."/>
            <person name="Blenis J."/>
            <person name="Coull B.J."/>
            <person name="Murray J.T."/>
            <person name="van Steensel M.A."/>
            <person name="Wilkinson S."/>
            <person name="Tee A.R."/>
        </authorList>
    </citation>
    <scope>INTERACTION WITH FLCN</scope>
</reference>
<reference key="24">
    <citation type="journal article" date="2014" name="Dev. Cell">
        <title>TRIM proteins regulate autophagy and can target autophagic substrates by direct recognition.</title>
        <authorList>
            <person name="Mandell M.A."/>
            <person name="Jain A."/>
            <person name="Arko-Mensah J."/>
            <person name="Chauhan S."/>
            <person name="Kimura T."/>
            <person name="Dinkins C."/>
            <person name="Silvestri G."/>
            <person name="Munch J."/>
            <person name="Kirchhoff F."/>
            <person name="Simonsen A."/>
            <person name="Wei Y."/>
            <person name="Levine B."/>
            <person name="Johansen T."/>
            <person name="Deretic V."/>
        </authorList>
    </citation>
    <scope>INTERACTION WITH TRIM5</scope>
</reference>
<reference key="25">
    <citation type="journal article" date="2015" name="J. Cell Biol.">
        <title>TRIM-mediated precision autophagy targets cytoplasmic regulators of innate immunity.</title>
        <authorList>
            <person name="Kimura T."/>
            <person name="Jain A."/>
            <person name="Choi S.W."/>
            <person name="Mandell M.A."/>
            <person name="Schroder K."/>
            <person name="Johansen T."/>
            <person name="Deretic V."/>
        </authorList>
    </citation>
    <scope>INTERACTION WITH MEFV AND TRIM21</scope>
</reference>
<reference key="26">
    <citation type="journal article" date="2016" name="J. Biol. Chem.">
        <title>Structural and functional analysis of a novel interaction motif within UFM1-activating enzyme 5 (UBA5) required for binding to ubiquitin-like proteins and ufmylation.</title>
        <authorList>
            <person name="Habisov S."/>
            <person name="Huber J."/>
            <person name="Ichimura Y."/>
            <person name="Akutsu M."/>
            <person name="Rogova N."/>
            <person name="Loehr F."/>
            <person name="McEwan D.G."/>
            <person name="Johansen T."/>
            <person name="Dikic I."/>
            <person name="Doetsch V."/>
            <person name="Komatsu M."/>
            <person name="Rogov V.V."/>
            <person name="Kirkin V."/>
        </authorList>
    </citation>
    <scope>INTERACTION WITH UBA5</scope>
</reference>
<reference key="27">
    <citation type="journal article" date="2018" name="J. Cell Biol.">
        <title>Mechanism of Stx17 recruitment to autophagosomes via IRGM and mammalian Atg8 proteins.</title>
        <authorList>
            <person name="Kumar S."/>
            <person name="Jain A."/>
            <person name="Farzam F."/>
            <person name="Jia J."/>
            <person name="Gu Y."/>
            <person name="Choi S.W."/>
            <person name="Mudd M.H."/>
            <person name="Claude-Taupin A."/>
            <person name="Wester M.J."/>
            <person name="Lidke K.A."/>
            <person name="Rusten T.E."/>
            <person name="Deretic V."/>
        </authorList>
    </citation>
    <scope>INTERACTION WITH IRGM AND STX17</scope>
</reference>
<reference key="28">
    <citation type="journal article" date="2019" name="Autophagy">
        <title>Redundancy of human ATG4 protease isoforms in autophagy and LC3/GABARAP processing revealed in cells.</title>
        <authorList>
            <person name="Agrotis A."/>
            <person name="Pengo N."/>
            <person name="Burden J.J."/>
            <person name="Ketteler R."/>
        </authorList>
    </citation>
    <scope>PROTEOLYTIC CLEAVAGE</scope>
</reference>
<reference key="29">
    <citation type="journal article" date="2019" name="Mol. Cell">
        <title>Intrinsically disordered protein TEX264 mediates ER-phagy.</title>
        <authorList>
            <person name="Chino H."/>
            <person name="Hatta T."/>
            <person name="Natsume T."/>
            <person name="Mizushima N."/>
        </authorList>
    </citation>
    <scope>INTERACTION WITH TEX264; FUNCTION</scope>
</reference>
<reference key="30">
    <citation type="journal article" date="2019" name="BMB Rep.">
        <title>LIR motifs and the membrane-targeting domain are complementary in the function of RavZ.</title>
        <authorList>
            <person name="Park S.W."/>
            <person name="Jun Y.W."/>
            <person name="Jeon P."/>
            <person name="Lee Y.K."/>
            <person name="Park J.H."/>
            <person name="Lee S.H."/>
            <person name="Lee J.A."/>
            <person name="Jang D.J."/>
        </authorList>
    </citation>
    <scope>DECONJUGATION BY LEGIONELLA RAVZ (MICROBIAL INFECTION)</scope>
</reference>
<reference key="31">
    <citation type="journal article" date="2020" name="Dev. Cell">
        <title>A DNM2 Centronuclear Myopathy Mutation Reveals a Link between Recycling Endosome Scission and Autophagy.</title>
        <authorList>
            <person name="Puri C."/>
            <person name="Manni M.M."/>
            <person name="Vicinanza M."/>
            <person name="Hilcenko C."/>
            <person name="Zhu Y."/>
            <person name="Runwal G."/>
            <person name="Stamatakou E."/>
            <person name="Menzies F.M."/>
            <person name="Mamchaoui K."/>
            <person name="Bitoun M."/>
            <person name="Rubinsztein D.C."/>
        </authorList>
    </citation>
    <scope>INTERACTION WITH DNM2</scope>
</reference>
<reference key="32">
    <citation type="journal article" date="2021" name="EMBO Rep.">
        <title>Role of FAM134 paralogues in endoplasmic reticulum remodeling, ER-phagy, and Collagen quality control.</title>
        <authorList>
            <person name="Reggio A."/>
            <person name="Buonomo V."/>
            <person name="Berkane R."/>
            <person name="Bhaskara R.M."/>
            <person name="Tellechea M."/>
            <person name="Peluso I."/>
            <person name="Polishchuk E."/>
            <person name="Di Lorenzo G."/>
            <person name="Cirillo C."/>
            <person name="Esposito M."/>
            <person name="Hussain A."/>
            <person name="Huebner A.K."/>
            <person name="Huebner C.A."/>
            <person name="Settembre C."/>
            <person name="Hummer G."/>
            <person name="Grumati P."/>
            <person name="Stolz A."/>
        </authorList>
    </citation>
    <scope>INTERACTION WITH RETREG1; RETREG2 AND RETREG3</scope>
</reference>
<reference key="33">
    <citation type="journal article" date="2021" name="Mol. Cell">
        <title>Non-canonical autophagy drives alternative ATG8 conjugation to phosphatidylserine.</title>
        <authorList>
            <person name="Durgan J."/>
            <person name="Lystad A.H."/>
            <person name="Sloan K."/>
            <person name="Carlsson S.R."/>
            <person name="Wilson M.I."/>
            <person name="Marcassa E."/>
            <person name="Ulferts R."/>
            <person name="Webster J."/>
            <person name="Lopez-Clavijo A.F."/>
            <person name="Wakelam M.J."/>
            <person name="Beale R."/>
            <person name="Simonsen A."/>
            <person name="Oxley D."/>
            <person name="Florey O."/>
        </authorList>
    </citation>
    <scope>LIPIDATION AT GLY-116</scope>
</reference>
<reference key="34">
    <citation type="journal article" date="2023" name="Cell Death Differ.">
        <title>Deficiency of cancer/testis antigen gene CT55 causes male infertility in humans and mice.</title>
        <authorList>
            <person name="Zhang G."/>
            <person name="Jiang C."/>
            <person name="Yang Y."/>
            <person name="Wang Y."/>
            <person name="Zhou H."/>
            <person name="Dai S."/>
            <person name="Liu M."/>
            <person name="Yang Y."/>
            <person name="Yang L."/>
            <person name="Shen Q."/>
            <person name="Zhang T."/>
            <person name="Zhang X."/>
            <person name="Yang Y."/>
            <person name="Shen Y."/>
        </authorList>
    </citation>
    <scope>INTERACTION WITH CT55</scope>
</reference>
<reference key="35">
    <citation type="journal article" date="2002" name="J. Biol. Chem.">
        <title>The X-ray crystal structure and putative ligand-derived peptide binding properties of gamma-aminobutyric acid receptor type A receptor-associated protein.</title>
        <authorList>
            <person name="Knight D."/>
            <person name="Harris R."/>
            <person name="McAlister M.S.B."/>
            <person name="Phelan J.P."/>
            <person name="Geddes S."/>
            <person name="Moss S.J."/>
            <person name="Driscoll P.C."/>
            <person name="Keep N.H."/>
        </authorList>
    </citation>
    <scope>X-RAY CRYSTALLOGRAPHY (1.75 ANGSTROMS)</scope>
    <scope>INTERACTION WITH GABRG2; ALPHA-TUBULIN AND BETA-TUBULIN</scope>
</reference>
<reference key="36">
    <citation type="journal article" date="2002" name="J. Biol. Chem.">
        <title>Solution structure of human GABA(A) receptor-associated protein GABARAP: implications for biological function and its regulation.</title>
        <authorList>
            <person name="Stangler T."/>
            <person name="Mayr L.M."/>
            <person name="Willbold D."/>
        </authorList>
    </citation>
    <scope>STRUCTURE BY NMR</scope>
</reference>
<reference key="37">
    <citation type="journal article" date="2002" name="J. Biomol. NMR">
        <title>1H, 13C and '5N resonance assignments of GABARAP, GABAA receptor associated protein.</title>
        <authorList>
            <person name="Kouno T."/>
            <person name="Miura K."/>
            <person name="Kanematsu T."/>
            <person name="Shirakawa M."/>
            <person name="Hirata M."/>
            <person name="Kawano K."/>
        </authorList>
    </citation>
    <scope>STRUCTURE BY NMR</scope>
</reference>
<reference key="38">
    <citation type="journal article" date="2008" name="J. Mol. Biol.">
        <title>Ligand binding mode of GABAA receptor-associated protein.</title>
        <authorList>
            <person name="Weiergraber O.H."/>
            <person name="Stangler T."/>
            <person name="Thielmann Y."/>
            <person name="Mohrluder J."/>
            <person name="Wiesehan K."/>
            <person name="Willbold D."/>
        </authorList>
    </citation>
    <scope>X-RAY CRYSTALLOGRAPHY (1.3 ANGSTROMS)</scope>
</reference>
<reference key="39">
    <citation type="journal article" date="2009" name="FEBS J.">
        <title>Structural framework of the GABARAP-calreticulin interface -- implications for substrate binding to endoplasmic reticulum chaperones.</title>
        <authorList>
            <person name="Thielmann Y."/>
            <person name="Weiergraber O.H."/>
            <person name="Mohrluder J."/>
            <person name="Willbold D."/>
        </authorList>
    </citation>
    <scope>X-RAY CRYSTALLOGRAPHY (2.3 ANGSTROMS) IN COMPLEX WITH CALR</scope>
    <scope>INTERACTION WITH CALR</scope>
</reference>
<reference evidence="40" key="40">
    <citation type="journal article" date="2014" name="EMBO Rep.">
        <title>Structural determinants in GABARAP required for the selective binding and recruitment of ALFY to LC3B-positive structures.</title>
        <authorList>
            <person name="Lystad A.H."/>
            <person name="Ichimura Y."/>
            <person name="Takagi K."/>
            <person name="Yang Y."/>
            <person name="Pankiv S."/>
            <person name="Kanegae Y."/>
            <person name="Kageyama S."/>
            <person name="Suzuki M."/>
            <person name="Saito I."/>
            <person name="Mizushima T."/>
            <person name="Komatsu M."/>
            <person name="Simonsen A."/>
        </authorList>
    </citation>
    <scope>X-RAY CRYSTALLOGRAPHY (2.60 ANGSTROMS) IN COMPLEX WITH WDFY3</scope>
    <scope>INTERACTION WITH SQSTM1</scope>
    <scope>MUTAGENESIS OF LYS-24; TYR-25 AND ASP-54</scope>
</reference>
<reference evidence="41" key="41">
    <citation type="journal article" date="2015" name="Mol. Cell">
        <title>CUL3-KBTBD6/KBTBD7 ubiquitin ligase cooperates with GABARAP proteins to spatially restrict TIAM1-RAC1 signaling.</title>
        <authorList>
            <person name="Genau H.M."/>
            <person name="Huber J."/>
            <person name="Baschieri F."/>
            <person name="Akutsu M."/>
            <person name="Doetsch V."/>
            <person name="Farhan H."/>
            <person name="Rogov V."/>
            <person name="Behrends C."/>
        </authorList>
    </citation>
    <scope>X-RAY CRYSTALLOGRAPHY (1.90 ANGSTROMS) OF 3-116 IN COMPLEX WITH KBTBD6 AIM MOTIF</scope>
    <scope>FUNCTION</scope>
    <scope>INTERACTION WITH KBTBD6 AND KBTBD7</scope>
</reference>
<reference evidence="42 43 44" key="42">
    <citation type="journal article" date="2020" name="Nat. Commun.">
        <title>Super-assembly of ER-phagy receptor Atg40 induces local ER remodeling at contacts with forming autophagosomal membranes.</title>
        <authorList>
            <person name="Mochida K."/>
            <person name="Yamasaki A."/>
            <person name="Matoba K."/>
            <person name="Kirisako H."/>
            <person name="Noda N.N."/>
            <person name="Nakatogawa H."/>
        </authorList>
    </citation>
    <scope>X-RAY CRYSTALLOGRAPHY (1.40 ANGSTROMS) OF 1-116 IN CHIMERIC CONSTRUCTS WITH RETREG1; RTN3 AND SEC62</scope>
</reference>
<reference evidence="45" key="43">
    <citation type="journal article" date="2023" name="ACS Cent. Sci.">
        <title>Semisynthetic LC3 Probes for Autophagy Pathways Reveal a Noncanonical LC3 Interacting Region Motif Crucial for the Enzymatic Activity of Human ATG3.</title>
        <authorList>
            <person name="Farnung J."/>
            <person name="Muhar M."/>
            <person name="Liang J.R."/>
            <person name="Tolmachova K.A."/>
            <person name="Benoit R.M."/>
            <person name="Corn J.E."/>
            <person name="Bode J.W."/>
        </authorList>
    </citation>
    <scope>X-RAY CRYSTALLOGRAPHY (2.66 ANGSTROMS) OF 2-116 IN COMPLEX WITH ATG3</scope>
    <scope>INTERACTION WITH ATG3</scope>
    <scope>REGION</scope>
    <scope>SITE</scope>
</reference>
<accession>O95166</accession>
<evidence type="ECO:0000250" key="1">
    <source>
        <dbReference type="UniProtKB" id="P60517"/>
    </source>
</evidence>
<evidence type="ECO:0000250" key="2">
    <source>
        <dbReference type="UniProtKB" id="Q9DCD6"/>
    </source>
</evidence>
<evidence type="ECO:0000269" key="3">
    <source>
    </source>
</evidence>
<evidence type="ECO:0000269" key="4">
    <source>
    </source>
</evidence>
<evidence type="ECO:0000269" key="5">
    <source>
    </source>
</evidence>
<evidence type="ECO:0000269" key="6">
    <source>
    </source>
</evidence>
<evidence type="ECO:0000269" key="7">
    <source>
    </source>
</evidence>
<evidence type="ECO:0000269" key="8">
    <source>
    </source>
</evidence>
<evidence type="ECO:0000269" key="9">
    <source>
    </source>
</evidence>
<evidence type="ECO:0000269" key="10">
    <source>
    </source>
</evidence>
<evidence type="ECO:0000269" key="11">
    <source>
    </source>
</evidence>
<evidence type="ECO:0000269" key="12">
    <source>
    </source>
</evidence>
<evidence type="ECO:0000269" key="13">
    <source>
    </source>
</evidence>
<evidence type="ECO:0000269" key="14">
    <source>
    </source>
</evidence>
<evidence type="ECO:0000269" key="15">
    <source>
    </source>
</evidence>
<evidence type="ECO:0000269" key="16">
    <source>
    </source>
</evidence>
<evidence type="ECO:0000269" key="17">
    <source>
    </source>
</evidence>
<evidence type="ECO:0000269" key="18">
    <source>
    </source>
</evidence>
<evidence type="ECO:0000269" key="19">
    <source>
    </source>
</evidence>
<evidence type="ECO:0000269" key="20">
    <source>
    </source>
</evidence>
<evidence type="ECO:0000269" key="21">
    <source>
    </source>
</evidence>
<evidence type="ECO:0000269" key="22">
    <source>
    </source>
</evidence>
<evidence type="ECO:0000269" key="23">
    <source>
    </source>
</evidence>
<evidence type="ECO:0000269" key="24">
    <source>
    </source>
</evidence>
<evidence type="ECO:0000269" key="25">
    <source>
    </source>
</evidence>
<evidence type="ECO:0000269" key="26">
    <source>
    </source>
</evidence>
<evidence type="ECO:0000269" key="27">
    <source>
    </source>
</evidence>
<evidence type="ECO:0000269" key="28">
    <source>
    </source>
</evidence>
<evidence type="ECO:0000269" key="29">
    <source>
    </source>
</evidence>
<evidence type="ECO:0000269" key="30">
    <source>
    </source>
</evidence>
<evidence type="ECO:0000269" key="31">
    <source>
    </source>
</evidence>
<evidence type="ECO:0000269" key="32">
    <source>
    </source>
</evidence>
<evidence type="ECO:0000269" key="33">
    <source>
    </source>
</evidence>
<evidence type="ECO:0000269" key="34">
    <source>
    </source>
</evidence>
<evidence type="ECO:0000269" key="35">
    <source>
    </source>
</evidence>
<evidence type="ECO:0000269" key="36">
    <source>
    </source>
</evidence>
<evidence type="ECO:0000269" key="37">
    <source>
    </source>
</evidence>
<evidence type="ECO:0000305" key="38"/>
<evidence type="ECO:0000312" key="39">
    <source>
        <dbReference type="HGNC" id="HGNC:4067"/>
    </source>
</evidence>
<evidence type="ECO:0007744" key="40">
    <source>
        <dbReference type="PDB" id="3WIM"/>
    </source>
</evidence>
<evidence type="ECO:0007744" key="41">
    <source>
        <dbReference type="PDB" id="4XC2"/>
    </source>
</evidence>
<evidence type="ECO:0007744" key="42">
    <source>
        <dbReference type="PDB" id="7BRQ"/>
    </source>
</evidence>
<evidence type="ECO:0007744" key="43">
    <source>
        <dbReference type="PDB" id="7BRT"/>
    </source>
</evidence>
<evidence type="ECO:0007744" key="44">
    <source>
        <dbReference type="PDB" id="7BRU"/>
    </source>
</evidence>
<evidence type="ECO:0007744" key="45">
    <source>
        <dbReference type="PDB" id="8AFI"/>
    </source>
</evidence>
<evidence type="ECO:0007829" key="46">
    <source>
        <dbReference type="PDB" id="1KM7"/>
    </source>
</evidence>
<evidence type="ECO:0007829" key="47">
    <source>
        <dbReference type="PDB" id="6HYO"/>
    </source>
</evidence>
<evidence type="ECO:0007829" key="48">
    <source>
        <dbReference type="PDB" id="7BV4"/>
    </source>
</evidence>
<evidence type="ECO:0007829" key="49">
    <source>
        <dbReference type="PDB" id="8AFI"/>
    </source>
</evidence>
<comment type="function">
    <text evidence="8 9 13 19 25 30 37">Ubiquitin-like modifier that plays a role in intracellular transport of GABA(A) receptors and its interaction with the cytoskeleton (PubMed:9892355). Involved in autophagy: while LC3s are involved in elongation of the phagophore membrane, the GABARAP/GATE-16 subfamily is essential for a later stage in autophagosome maturation (PubMed:15169837, PubMed:20562859, PubMed:22948227). Through its interaction with the reticulophagy receptor TEX264, participates in the remodeling of subdomains of the endoplasmic reticulum into autophagosomes upon nutrient stress, which then fuse with lysosomes for endoplasmic reticulum turnover (PubMed:31006538). Also required for the local activation of the CUL3(KBTBD6/7) E3 ubiquitin ligase complex, regulating ubiquitination and degradation of TIAM1, a guanyl-nucleotide exchange factor (GEF) that activates RAC1 and downstream signal transduction (PubMed:25684205). Thereby, regulates different biological processes including the organization of the cytoskeleton, cell migration and proliferation (PubMed:25684205). Involved in apoptosis (PubMed:15977068).</text>
</comment>
<comment type="subunit">
    <text evidence="1 2 3 4 5 6 7 9 10 11 12 13 15 16 17 18 19 20 21 22 23 24 25 26 27 28 30 32 34 35 37">Interacts with GPHN and NSF (By similarity). Interacts with ATG7, ATG13 (PubMed:11096062, PubMed:12507496, PubMed:23043107). Interacts with ATG3 (PubMed:11825910, PubMed:12507496, PubMed:37252361). Interacts with alpha- and beta-tubulin (PubMed:11729197, PubMed:9892355). Interacts with GABRG2 (PubMed:11729197, PubMed:9892355). Interacts with RB1CC1 (PubMed:23043107). Interacts with ULK1 (PubMed:11146101, PubMed:23043107). Interacts with CALR (PubMed:19154346). Interacts with DDX47 (PubMed:15977068). Interacts with TP53INP1 and TP53INP2 (PubMed:19056683, PubMed:22421968, PubMed:22470510). Interacts with TBC1D5 and TBC1D25 (PubMed:21383079, PubMed:22354992). Directly interacts with SQSTM1 (PubMed:17580304, PubMed:24668264). Interacts with MAPK15 (PubMed:22948227). Interacts with TECPR2 (PubMed:20562859). Interacts with PCM1 (PubMed:24089205). Interacts with TRIM5 and TRIM21 (PubMed:25127057, PubMed:26347139). Interacts with MEFV (PubMed:26347139). Interacts with KIF21B (By similarity). Interacts with WDFY3; this interaction is required for WDFY3 recruitment to MAP1LC3B-positive p62/SQSTM1 bodies (PubMed:24668264). Interacts with the reticulophagy receptor TEX264 (PubMed:31006538). Interacts with UBA5 (PubMed:26929408). Interacts with FLCN; interaction regulates autophagy (PubMed:25126726). Interacts with KBTBD6 and KBTBD7; the interaction is direct and required for the ubiquitination of TIAM1 (PubMed:25684205). Interacts with reticulophagy regulators RETREG1, RETREG2 and RETREG3 (PubMed:34338405). Interacts with IRGM (PubMed:29420192). Interacts with STX17 (PubMed:29420192). Interacts with CT55; this interaction may be important for GABARAP protein stability (PubMed:36481789). Interacts with DNM2 (PubMed:32315611). Interacts with NCOA4 (via C-terminus) (By similarity).</text>
</comment>
<comment type="interaction">
    <interactant intactId="EBI-712001">
        <id>O95166</id>
    </interactant>
    <interactant intactId="EBI-2798775">
        <id>O75143</id>
        <label>ATG13</label>
    </interactant>
    <organismsDiffer>false</organismsDiffer>
    <experiments>3</experiments>
</comment>
<comment type="interaction">
    <interactant intactId="EBI-712001">
        <id>O95166</id>
    </interactant>
    <interactant intactId="EBI-2514077">
        <id>Q2TAZ0</id>
        <label>ATG2A</label>
    </interactant>
    <organismsDiffer>false</organismsDiffer>
    <experiments>2</experiments>
</comment>
<comment type="interaction">
    <interactant intactId="EBI-712001">
        <id>O95166</id>
    </interactant>
    <interactant intactId="EBI-988094">
        <id>Q9NT62</id>
        <label>ATG3</label>
    </interactant>
    <organismsDiffer>false</organismsDiffer>
    <experiments>5</experiments>
</comment>
<comment type="interaction">
    <interactant intactId="EBI-712001">
        <id>O95166</id>
    </interactant>
    <interactant intactId="EBI-712014">
        <id>Q9Y4P1</id>
        <label>ATG4B</label>
    </interactant>
    <organismsDiffer>false</organismsDiffer>
    <experiments>9</experiments>
</comment>
<comment type="interaction">
    <interactant intactId="EBI-712001">
        <id>O95166</id>
    </interactant>
    <interactant intactId="EBI-1047414">
        <id>Q9H1Y0</id>
        <label>ATG5</label>
    </interactant>
    <organismsDiffer>false</organismsDiffer>
    <experiments>2</experiments>
</comment>
<comment type="interaction">
    <interactant intactId="EBI-712001">
        <id>O95166</id>
    </interactant>
    <interactant intactId="EBI-987834">
        <id>O95352</id>
        <label>ATG7</label>
    </interactant>
    <organismsDiffer>false</organismsDiffer>
    <experiments>8</experiments>
</comment>
<comment type="interaction">
    <interactant intactId="EBI-712001">
        <id>O95166</id>
    </interactant>
    <interactant intactId="EBI-1049597">
        <id>P27797</id>
        <label>CALR</label>
    </interactant>
    <organismsDiffer>false</organismsDiffer>
    <experiments>4</experiments>
</comment>
<comment type="interaction">
    <interactant intactId="EBI-712001">
        <id>O95166</id>
    </interactant>
    <interactant intactId="EBI-2515241">
        <id>Q9H0S4</id>
        <label>DDX47</label>
    </interactant>
    <organismsDiffer>false</organismsDiffer>
    <experiments>3</experiments>
</comment>
<comment type="interaction">
    <interactant intactId="EBI-712001">
        <id>O95166</id>
    </interactant>
    <interactant intactId="EBI-2946907">
        <id>Q8WXU2</id>
        <label>DNAAF4</label>
    </interactant>
    <organismsDiffer>false</organismsDiffer>
    <experiments>4</experiments>
</comment>
<comment type="interaction">
    <interactant intactId="EBI-712001">
        <id>O95166</id>
    </interactant>
    <interactant intactId="EBI-1111248">
        <id>Q96RU3</id>
        <label>FNBP1</label>
    </interactant>
    <organismsDiffer>false</organismsDiffer>
    <experiments>2</experiments>
</comment>
<comment type="interaction">
    <interactant intactId="EBI-712001">
        <id>O95166</id>
    </interactant>
    <interactant intactId="EBI-2946919">
        <id>Q8TF40</id>
        <label>FNIP1</label>
    </interactant>
    <organismsDiffer>false</organismsDiffer>
    <experiments>5</experiments>
</comment>
<comment type="interaction">
    <interactant intactId="EBI-712001">
        <id>O95166</id>
    </interactant>
    <interactant intactId="EBI-2869338">
        <id>Q9BQS8</id>
        <label>FYCO1</label>
    </interactant>
    <organismsDiffer>false</organismsDiffer>
    <experiments>2</experiments>
</comment>
<comment type="interaction">
    <interactant intactId="EBI-712001">
        <id>O95166</id>
    </interactant>
    <interactant intactId="EBI-15096952">
        <id>P18507-2</id>
        <label>GABRG2</label>
    </interactant>
    <organismsDiffer>false</organismsDiffer>
    <experiments>3</experiments>
</comment>
<comment type="interaction">
    <interactant intactId="EBI-712001">
        <id>O95166</id>
    </interactant>
    <interactant intactId="EBI-356720">
        <id>P40939</id>
        <label>HADHA</label>
    </interactant>
    <organismsDiffer>false</organismsDiffer>
    <experiments>5</experiments>
</comment>
<comment type="interaction">
    <interactant intactId="EBI-712001">
        <id>O95166</id>
    </interactant>
    <interactant intactId="EBI-356424">
        <id>O00410</id>
        <label>IPO5</label>
    </interactant>
    <organismsDiffer>false</organismsDiffer>
    <experiments>6</experiments>
</comment>
<comment type="interaction">
    <interactant intactId="EBI-712001">
        <id>O95166</id>
    </interactant>
    <interactant intactId="EBI-2514778">
        <id>Q86V97</id>
        <label>KBTBD6</label>
    </interactant>
    <organismsDiffer>false</organismsDiffer>
    <experiments>7</experiments>
</comment>
<comment type="interaction">
    <interactant intactId="EBI-712001">
        <id>O95166</id>
    </interactant>
    <interactant intactId="EBI-473695">
        <id>Q8WVZ9</id>
        <label>KBTBD7</label>
    </interactant>
    <organismsDiffer>false</organismsDiffer>
    <experiments>7</experiments>
</comment>
<comment type="interaction">
    <interactant intactId="EBI-712001">
        <id>O95166</id>
    </interactant>
    <interactant intactId="EBI-2129148">
        <id>Q86YT6</id>
        <label>MIB1</label>
    </interactant>
    <organismsDiffer>false</organismsDiffer>
    <experiments>3</experiments>
</comment>
<comment type="interaction">
    <interactant intactId="EBI-712001">
        <id>O95166</id>
    </interactant>
    <interactant intactId="EBI-742698">
        <id>Q14596</id>
        <label>NBR1</label>
    </interactant>
    <organismsDiffer>false</organismsDiffer>
    <experiments>6</experiments>
</comment>
<comment type="interaction">
    <interactant intactId="EBI-712001">
        <id>O95166</id>
    </interactant>
    <interactant intactId="EBI-80799">
        <id>Q8NI08</id>
        <label>NCOA7</label>
    </interactant>
    <organismsDiffer>false</organismsDiffer>
    <experiments>4</experiments>
</comment>
<comment type="interaction">
    <interactant intactId="EBI-712001">
        <id>O95166</id>
    </interactant>
    <interactant intactId="EBI-726944">
        <id>P46934</id>
        <label>NEDD4</label>
    </interactant>
    <organismsDiffer>false</organismsDiffer>
    <experiments>6</experiments>
</comment>
<comment type="interaction">
    <interactant intactId="EBI-712001">
        <id>O95166</id>
    </interactant>
    <interactant intactId="EBI-1044009">
        <id>Q8TD19</id>
        <label>NEK9</label>
    </interactant>
    <organismsDiffer>false</organismsDiffer>
    <experiments>5</experiments>
</comment>
<comment type="interaction">
    <interactant intactId="EBI-712001">
        <id>O95166</id>
    </interactant>
    <interactant intactId="EBI-307133">
        <id>O75323</id>
        <label>NIPSNAP2</label>
    </interactant>
    <organismsDiffer>false</organismsDiffer>
    <experiments>5</experiments>
</comment>
<comment type="interaction">
    <interactant intactId="EBI-712001">
        <id>O95166</id>
    </interactant>
    <interactant intactId="EBI-2947053">
        <id>Q92636</id>
        <label>NSMAF</label>
    </interactant>
    <organismsDiffer>false</organismsDiffer>
    <experiments>2</experiments>
</comment>
<comment type="interaction">
    <interactant intactId="EBI-712001">
        <id>O95166</id>
    </interactant>
    <interactant intactId="EBI-741421">
        <id>Q15154</id>
        <label>PCM1</label>
    </interactant>
    <organismsDiffer>false</organismsDiffer>
    <experiments>8</experiments>
</comment>
<comment type="interaction">
    <interactant intactId="EBI-712001">
        <id>O95166</id>
    </interactant>
    <interactant intactId="EBI-473814">
        <id>Q9Y4G2</id>
        <label>PLEKHM1</label>
    </interactant>
    <organismsDiffer>false</organismsDiffer>
    <experiments>2</experiments>
</comment>
<comment type="interaction">
    <interactant intactId="EBI-712001">
        <id>O95166</id>
    </interactant>
    <interactant intactId="EBI-367363">
        <id>Q9NS23</id>
        <label>RASSF1</label>
    </interactant>
    <organismsDiffer>false</organismsDiffer>
    <experiments>2</experiments>
</comment>
<comment type="interaction">
    <interactant intactId="EBI-712001">
        <id>O95166</id>
    </interactant>
    <interactant intactId="EBI-367390">
        <id>Q8WWW0</id>
        <label>RASSF5</label>
    </interactant>
    <organismsDiffer>false</organismsDiffer>
    <experiments>2</experiments>
</comment>
<comment type="interaction">
    <interactant intactId="EBI-712001">
        <id>O95166</id>
    </interactant>
    <interactant intactId="EBI-949221">
        <id>Q99442</id>
        <label>SEC62</label>
    </interactant>
    <organismsDiffer>false</organismsDiffer>
    <experiments>3</experiments>
</comment>
<comment type="interaction">
    <interactant intactId="EBI-712001">
        <id>O95166</id>
    </interactant>
    <interactant intactId="EBI-307104">
        <id>Q13501</id>
        <label>SQSTM1</label>
    </interactant>
    <organismsDiffer>false</organismsDiffer>
    <experiments>17</experiments>
</comment>
<comment type="interaction">
    <interactant intactId="EBI-712001">
        <id>O95166</id>
    </interactant>
    <interactant intactId="EBI-2947137">
        <id>O95210</id>
        <label>STBD1</label>
    </interactant>
    <organismsDiffer>false</organismsDiffer>
    <experiments>8</experiments>
</comment>
<comment type="interaction">
    <interactant intactId="EBI-712001">
        <id>O95166</id>
    </interactant>
    <interactant intactId="EBI-992580">
        <id>Q13188</id>
        <label>STK3</label>
    </interactant>
    <organismsDiffer>false</organismsDiffer>
    <experiments>2</experiments>
</comment>
<comment type="interaction">
    <interactant intactId="EBI-712001">
        <id>O95166</id>
    </interactant>
    <interactant intactId="EBI-367376">
        <id>Q13043</id>
        <label>STK4</label>
    </interactant>
    <organismsDiffer>false</organismsDiffer>
    <experiments>2</experiments>
</comment>
<comment type="interaction">
    <interactant intactId="EBI-712001">
        <id>O95166</id>
    </interactant>
    <interactant intactId="EBI-1048247">
        <id>Q8TC07</id>
        <label>TBC1D15</label>
    </interactant>
    <organismsDiffer>false</organismsDiffer>
    <experiments>5</experiments>
</comment>
<comment type="interaction">
    <interactant intactId="EBI-712001">
        <id>O95166</id>
    </interactant>
    <interactant intactId="EBI-2947180">
        <id>Q9UPU7</id>
        <label>TBC1D2B</label>
    </interactant>
    <organismsDiffer>false</organismsDiffer>
    <experiments>2</experiments>
</comment>
<comment type="interaction">
    <interactant intactId="EBI-712001">
        <id>O95166</id>
    </interactant>
    <interactant intactId="EBI-2946991">
        <id>O15040</id>
        <label>TECPR2</label>
    </interactant>
    <organismsDiffer>false</organismsDiffer>
    <experiments>2</experiments>
</comment>
<comment type="interaction">
    <interactant intactId="EBI-712001">
        <id>O95166</id>
    </interactant>
    <interactant intactId="EBI-9986117">
        <id>Q96A56</id>
        <label>TP53INP1</label>
    </interactant>
    <organismsDiffer>false</organismsDiffer>
    <experiments>3</experiments>
</comment>
<comment type="interaction">
    <interactant intactId="EBI-712001">
        <id>O95166</id>
    </interactant>
    <interactant intactId="EBI-746981">
        <id>Q969E8</id>
        <label>TSR2</label>
    </interactant>
    <organismsDiffer>false</organismsDiffer>
    <experiments>5</experiments>
</comment>
<comment type="interaction">
    <interactant intactId="EBI-712001">
        <id>O95166</id>
    </interactant>
    <interactant intactId="EBI-747805">
        <id>Q9GZZ9</id>
        <label>UBA5</label>
    </interactant>
    <organismsDiffer>false</organismsDiffer>
    <experiments>2</experiments>
</comment>
<comment type="interaction">
    <interactant intactId="EBI-712001">
        <id>O95166</id>
    </interactant>
    <interactant intactId="EBI-1774669">
        <id>Q9Z2F7</id>
        <label>Bnip3l</label>
    </interactant>
    <organismsDiffer>true</organismsDiffer>
    <experiments>2</experiments>
</comment>
<comment type="subcellular location">
    <subcellularLocation>
        <location evidence="7 8 10 11">Cytoplasmic vesicle</location>
        <location evidence="7 8 10 11">Autophagosome membrane</location>
    </subcellularLocation>
    <subcellularLocation>
        <location evidence="1">Endomembrane system</location>
    </subcellularLocation>
    <subcellularLocation>
        <location evidence="1">Cytoplasm</location>
        <location evidence="1">Cytoskeleton</location>
    </subcellularLocation>
    <subcellularLocation>
        <location evidence="1">Golgi apparatus membrane</location>
    </subcellularLocation>
    <subcellularLocation>
        <location evidence="1">Cytoplasmic vesicle</location>
    </subcellularLocation>
    <text evidence="1 2">Largely associated with intracellular membrane structures including the Golgi apparatus and postsynaptic cisternae. Colocalizes with microtubules (By similarity). Also localizes to discrete punctae along the ciliary axoneme (By similarity).</text>
</comment>
<comment type="tissue specificity">
    <text evidence="4 37">Heart, brain, placenta, liver, skeletal muscle, kidney and pancreas.</text>
</comment>
<comment type="PTM">
    <text evidence="2 8 14 29 33">The precursor molecule is cleaved by ATG4 (ATG4A, ATG4B, ATG4C or ATG4D) to expose the glycine at the C-terminus and form the cytosolic form, GABARAP-I (PubMed:15169837, PubMed:20818167, PubMed:30661429). The processed form is then activated by APG7L/ATG7, transferred to ATG3 and conjugated to phosphatidylethanolamine (PE) phospholipid to form the membrane-bound form, GABARAP-II (PubMed:15169837). During non-canonical autophagy, the processed form is conjugated to phosphatidylserine (PS) phospholipid (PubMed:33909989). ATG4 proteins also mediate the delipidation of PE-conjugated forms (PubMed:33909989). In addition, ATG4B and ATG4D mediate delipidation of ATG8 proteins conjugated to PS during non-canonical autophagy (PubMed:33909989). ATG4B constitutes the major protein for proteolytic activation (PubMed:30661429). ATG4D is the main enzyme for delipidation activity (By similarity).</text>
</comment>
<comment type="PTM">
    <text evidence="31 33">(Microbial infection) The Legionella effector RavZ is a deconjugating enzyme that hydrolyzes the amide bond between the C-terminal glycine residue and an adjacent aromatic residue in ATG8 proteins conjugated to phosphatidylethanolamine (PE), producing an ATG8 protein that is resistant to reconjugation by the host machinery due to the cleavage of the reactive C-terminal glycine (PubMed:31722778). RavZ is also able to mediate delipidation of ATG8 proteins conjugated to phosphatidylserine (PS) (PubMed:33909989).</text>
</comment>
<comment type="similarity">
    <text evidence="38">Belongs to the ATG8 family.</text>
</comment>
<keyword id="KW-0002">3D-structure</keyword>
<keyword id="KW-0053">Apoptosis</keyword>
<keyword id="KW-0072">Autophagy</keyword>
<keyword id="KW-0963">Cytoplasm</keyword>
<keyword id="KW-0968">Cytoplasmic vesicle</keyword>
<keyword id="KW-0206">Cytoskeleton</keyword>
<keyword id="KW-0333">Golgi apparatus</keyword>
<keyword id="KW-0449">Lipoprotein</keyword>
<keyword id="KW-0472">Membrane</keyword>
<keyword id="KW-0493">Microtubule</keyword>
<keyword id="KW-0653">Protein transport</keyword>
<keyword id="KW-1267">Proteomics identification</keyword>
<keyword id="KW-1185">Reference proteome</keyword>
<keyword id="KW-0813">Transport</keyword>
<proteinExistence type="evidence at protein level"/>
<sequence length="117" mass="13918">MKFVYKEEHPFEKRRSEGEKIRKKYPDRVPVIVEKAPKARIGDLDKKKYLVPSDLTVGQFYFLIRKRIHLRAEDALFFFVNNVIPPTSATMGQLYQEHHEEDFFLYIAYSDESVYGL</sequence>
<protein>
    <recommendedName>
        <fullName evidence="38">Gamma-aminobutyric acid receptor-associated protein</fullName>
    </recommendedName>
    <alternativeName>
        <fullName>GABA(A) receptor-associated protein</fullName>
    </alternativeName>
    <alternativeName>
        <fullName>MM46</fullName>
    </alternativeName>
</protein>